<sequence>MAELEFEKPVVELRNKIRELKDYTKNSQMDFSEEIRILEDKLENLEEDIYGNMKVWDRVQIARHAERPTTLDYIEHLFTDFFECHGDRLFGDDAAIVGGIAKYKGMPVTVIGHQRGKDTKENIRRNFGMPHPEGYRKALRLMKQAEKFNRPIICFIDTKGAYPGKAAEERGQSEAIARNLFEMAGLTVPVICIVIGEGGSGGALGLGVGDYIHMLENSTYSVITPEGAAAILWKDAGKAKEAAEAMRITAADLKELGVIDEIIPEAKGGAHRNVLKQSENIDLMLRKTFEQLNGISKDELIEKRYEKYMKIGQVSFSNASIWIK</sequence>
<feature type="chain" id="PRO_1000134459" description="Acetyl-coenzyme A carboxylase carboxyl transferase subunit alpha">
    <location>
        <begin position="1"/>
        <end position="324"/>
    </location>
</feature>
<feature type="domain" description="CoA carboxyltransferase C-terminal" evidence="2">
    <location>
        <begin position="37"/>
        <end position="291"/>
    </location>
</feature>
<reference key="1">
    <citation type="submission" date="2008-10" db="EMBL/GenBank/DDBJ databases">
        <title>Genome sequence of Bacillus cereus AH187.</title>
        <authorList>
            <person name="Dodson R.J."/>
            <person name="Durkin A.S."/>
            <person name="Rosovitz M.J."/>
            <person name="Rasko D.A."/>
            <person name="Kolsto A.B."/>
            <person name="Okstad O.A."/>
            <person name="Ravel J."/>
            <person name="Sutton G."/>
        </authorList>
    </citation>
    <scope>NUCLEOTIDE SEQUENCE [LARGE SCALE GENOMIC DNA]</scope>
    <source>
        <strain>AH187</strain>
    </source>
</reference>
<accession>B7HRP0</accession>
<dbReference type="EC" id="2.1.3.15" evidence="1"/>
<dbReference type="EMBL" id="CP001177">
    <property type="protein sequence ID" value="ACJ78173.1"/>
    <property type="molecule type" value="Genomic_DNA"/>
</dbReference>
<dbReference type="SMR" id="B7HRP0"/>
<dbReference type="KEGG" id="bcr:BCAH187_A4726"/>
<dbReference type="HOGENOM" id="CLU_015486_0_2_9"/>
<dbReference type="UniPathway" id="UPA00655">
    <property type="reaction ID" value="UER00711"/>
</dbReference>
<dbReference type="Proteomes" id="UP000002214">
    <property type="component" value="Chromosome"/>
</dbReference>
<dbReference type="GO" id="GO:0009317">
    <property type="term" value="C:acetyl-CoA carboxylase complex"/>
    <property type="evidence" value="ECO:0007669"/>
    <property type="project" value="InterPro"/>
</dbReference>
<dbReference type="GO" id="GO:0003989">
    <property type="term" value="F:acetyl-CoA carboxylase activity"/>
    <property type="evidence" value="ECO:0007669"/>
    <property type="project" value="InterPro"/>
</dbReference>
<dbReference type="GO" id="GO:0005524">
    <property type="term" value="F:ATP binding"/>
    <property type="evidence" value="ECO:0007669"/>
    <property type="project" value="UniProtKB-KW"/>
</dbReference>
<dbReference type="GO" id="GO:0016743">
    <property type="term" value="F:carboxyl- or carbamoyltransferase activity"/>
    <property type="evidence" value="ECO:0007669"/>
    <property type="project" value="UniProtKB-UniRule"/>
</dbReference>
<dbReference type="GO" id="GO:0006633">
    <property type="term" value="P:fatty acid biosynthetic process"/>
    <property type="evidence" value="ECO:0007669"/>
    <property type="project" value="UniProtKB-KW"/>
</dbReference>
<dbReference type="GO" id="GO:2001295">
    <property type="term" value="P:malonyl-CoA biosynthetic process"/>
    <property type="evidence" value="ECO:0007669"/>
    <property type="project" value="UniProtKB-UniRule"/>
</dbReference>
<dbReference type="Gene3D" id="3.90.226.10">
    <property type="entry name" value="2-enoyl-CoA Hydratase, Chain A, domain 1"/>
    <property type="match status" value="1"/>
</dbReference>
<dbReference type="HAMAP" id="MF_00823">
    <property type="entry name" value="AcetylCoA_CT_alpha"/>
    <property type="match status" value="1"/>
</dbReference>
<dbReference type="InterPro" id="IPR001095">
    <property type="entry name" value="Acetyl_CoA_COase_a_su"/>
</dbReference>
<dbReference type="InterPro" id="IPR029045">
    <property type="entry name" value="ClpP/crotonase-like_dom_sf"/>
</dbReference>
<dbReference type="InterPro" id="IPR011763">
    <property type="entry name" value="COA_CT_C"/>
</dbReference>
<dbReference type="NCBIfam" id="TIGR00513">
    <property type="entry name" value="accA"/>
    <property type="match status" value="1"/>
</dbReference>
<dbReference type="NCBIfam" id="NF041504">
    <property type="entry name" value="AccA_sub"/>
    <property type="match status" value="1"/>
</dbReference>
<dbReference type="NCBIfam" id="NF004344">
    <property type="entry name" value="PRK05724.1"/>
    <property type="match status" value="1"/>
</dbReference>
<dbReference type="PANTHER" id="PTHR42853">
    <property type="entry name" value="ACETYL-COENZYME A CARBOXYLASE CARBOXYL TRANSFERASE SUBUNIT ALPHA"/>
    <property type="match status" value="1"/>
</dbReference>
<dbReference type="PANTHER" id="PTHR42853:SF3">
    <property type="entry name" value="ACETYL-COENZYME A CARBOXYLASE CARBOXYL TRANSFERASE SUBUNIT ALPHA, CHLOROPLASTIC"/>
    <property type="match status" value="1"/>
</dbReference>
<dbReference type="Pfam" id="PF03255">
    <property type="entry name" value="ACCA"/>
    <property type="match status" value="1"/>
</dbReference>
<dbReference type="PRINTS" id="PR01069">
    <property type="entry name" value="ACCCTRFRASEA"/>
</dbReference>
<dbReference type="SUPFAM" id="SSF52096">
    <property type="entry name" value="ClpP/crotonase"/>
    <property type="match status" value="1"/>
</dbReference>
<dbReference type="PROSITE" id="PS50989">
    <property type="entry name" value="COA_CT_CTER"/>
    <property type="match status" value="1"/>
</dbReference>
<evidence type="ECO:0000255" key="1">
    <source>
        <dbReference type="HAMAP-Rule" id="MF_00823"/>
    </source>
</evidence>
<evidence type="ECO:0000255" key="2">
    <source>
        <dbReference type="PROSITE-ProRule" id="PRU01137"/>
    </source>
</evidence>
<gene>
    <name evidence="1" type="primary">accA</name>
    <name type="ordered locus">BCAH187_A4726</name>
</gene>
<name>ACCA_BACC7</name>
<comment type="function">
    <text evidence="1">Component of the acetyl coenzyme A carboxylase (ACC) complex. First, biotin carboxylase catalyzes the carboxylation of biotin on its carrier protein (BCCP) and then the CO(2) group is transferred by the carboxyltransferase to acetyl-CoA to form malonyl-CoA.</text>
</comment>
<comment type="catalytic activity">
    <reaction evidence="1">
        <text>N(6)-carboxybiotinyl-L-lysyl-[protein] + acetyl-CoA = N(6)-biotinyl-L-lysyl-[protein] + malonyl-CoA</text>
        <dbReference type="Rhea" id="RHEA:54728"/>
        <dbReference type="Rhea" id="RHEA-COMP:10505"/>
        <dbReference type="Rhea" id="RHEA-COMP:10506"/>
        <dbReference type="ChEBI" id="CHEBI:57288"/>
        <dbReference type="ChEBI" id="CHEBI:57384"/>
        <dbReference type="ChEBI" id="CHEBI:83144"/>
        <dbReference type="ChEBI" id="CHEBI:83145"/>
        <dbReference type="EC" id="2.1.3.15"/>
    </reaction>
</comment>
<comment type="pathway">
    <text evidence="1">Lipid metabolism; malonyl-CoA biosynthesis; malonyl-CoA from acetyl-CoA: step 1/1.</text>
</comment>
<comment type="subunit">
    <text evidence="1">Acetyl-CoA carboxylase is a heterohexamer composed of biotin carboxyl carrier protein (AccB), biotin carboxylase (AccC) and two subunits each of ACCase subunit alpha (AccA) and ACCase subunit beta (AccD).</text>
</comment>
<comment type="subcellular location">
    <subcellularLocation>
        <location evidence="1">Cytoplasm</location>
    </subcellularLocation>
</comment>
<comment type="similarity">
    <text evidence="1">Belongs to the AccA family.</text>
</comment>
<protein>
    <recommendedName>
        <fullName evidence="1">Acetyl-coenzyme A carboxylase carboxyl transferase subunit alpha</fullName>
        <shortName evidence="1">ACCase subunit alpha</shortName>
        <shortName evidence="1">Acetyl-CoA carboxylase carboxyltransferase subunit alpha</shortName>
        <ecNumber evidence="1">2.1.3.15</ecNumber>
    </recommendedName>
</protein>
<keyword id="KW-0067">ATP-binding</keyword>
<keyword id="KW-0963">Cytoplasm</keyword>
<keyword id="KW-0275">Fatty acid biosynthesis</keyword>
<keyword id="KW-0276">Fatty acid metabolism</keyword>
<keyword id="KW-0444">Lipid biosynthesis</keyword>
<keyword id="KW-0443">Lipid metabolism</keyword>
<keyword id="KW-0547">Nucleotide-binding</keyword>
<keyword id="KW-0808">Transferase</keyword>
<proteinExistence type="inferred from homology"/>
<organism>
    <name type="scientific">Bacillus cereus (strain AH187)</name>
    <dbReference type="NCBI Taxonomy" id="405534"/>
    <lineage>
        <taxon>Bacteria</taxon>
        <taxon>Bacillati</taxon>
        <taxon>Bacillota</taxon>
        <taxon>Bacilli</taxon>
        <taxon>Bacillales</taxon>
        <taxon>Bacillaceae</taxon>
        <taxon>Bacillus</taxon>
        <taxon>Bacillus cereus group</taxon>
    </lineage>
</organism>